<comment type="function">
    <text evidence="7 9">Involved in pre-mRNA splicing, specifically in spliceosome disassembly during late-stage splicing events. Intron turnover seems to proceed through reactions in two lariat-intron associated complexes termed Intron Large (IL) and Intron Small (IS). In cooperation with DHX15 seems to mediate the transition of the U2, U5 and U6 snRNP-containing IL complex to the snRNP-free IS complex leading to efficient debranching and turnover of excised introns. May play a role in the differentiation of ameloblasts and odontoblasts or in the forming of the enamel extracellular matrix.</text>
</comment>
<comment type="subunit">
    <text evidence="6 8">Identified in the spliceosome C complex. Found in the Intron Large (IL) complex, a post-mRNA release spliceosomal complex containing the excised intron, U2, U5 and U6 snRNPs, and splicing factors. Interacts with TUFT1. Interacts with DHX15; indicative for a recruitment of DHX15 to the IL complex. Interacts with GCFC2.</text>
</comment>
<comment type="interaction">
    <interactant intactId="EBI-8338752">
        <id>Q9ERA6</id>
    </interactant>
    <interactant intactId="EBI-8322087">
        <id>O35286</id>
        <label>Dhx15</label>
    </interactant>
    <organismsDiffer>false</organismsDiffer>
    <experiments>3</experiments>
</comment>
<comment type="subcellular location">
    <subcellularLocation>
        <location>Cytoplasm</location>
    </subcellularLocation>
    <subcellularLocation>
        <location>Nucleus</location>
    </subcellularLocation>
    <text>In the nucleus localizes to unique speckle domains in close proximity to nuclear speckles and not identical to paraspeckles.</text>
</comment>
<comment type="tissue specificity">
    <text>Widely expressed. In tooth it is expressed in ameloblasts and odontoblasts.</text>
</comment>
<comment type="developmental stage">
    <text>Expressed as early as 14 dpc and continues into postnatal development. Within the developing tooth, expression is localized at the apical region of the ameloblast cells and to the apical regions of the newly formed enamel matrix.</text>
</comment>
<comment type="similarity">
    <text evidence="10">Belongs to the TFP11/STIP family.</text>
</comment>
<gene>
    <name type="primary">Tfip11</name>
    <name type="synonym">Stip</name>
    <name type="synonym">Tip39</name>
</gene>
<name>TFP11_MOUSE</name>
<accession>Q9ERA6</accession>
<accession>Q8VD06</accession>
<evidence type="ECO:0000250" key="1"/>
<evidence type="ECO:0000250" key="2">
    <source>
        <dbReference type="UniProtKB" id="Q5U2Y6"/>
    </source>
</evidence>
<evidence type="ECO:0000250" key="3">
    <source>
        <dbReference type="UniProtKB" id="Q9UBB9"/>
    </source>
</evidence>
<evidence type="ECO:0000255" key="4">
    <source>
        <dbReference type="PROSITE-ProRule" id="PRU00092"/>
    </source>
</evidence>
<evidence type="ECO:0000256" key="5">
    <source>
        <dbReference type="SAM" id="MobiDB-lite"/>
    </source>
</evidence>
<evidence type="ECO:0000269" key="6">
    <source>
    </source>
</evidence>
<evidence type="ECO:0000269" key="7">
    <source>
    </source>
</evidence>
<evidence type="ECO:0000269" key="8">
    <source>
    </source>
</evidence>
<evidence type="ECO:0000269" key="9">
    <source>
    </source>
</evidence>
<evidence type="ECO:0000305" key="10"/>
<evidence type="ECO:0007744" key="11">
    <source>
    </source>
</evidence>
<evidence type="ECO:0007744" key="12">
    <source>
    </source>
</evidence>
<evidence type="ECO:0007744" key="13">
    <source>
    </source>
</evidence>
<keyword id="KW-0091">Biomineralization</keyword>
<keyword id="KW-0963">Cytoplasm</keyword>
<keyword id="KW-0903">Direct protein sequencing</keyword>
<keyword id="KW-0507">mRNA processing</keyword>
<keyword id="KW-0508">mRNA splicing</keyword>
<keyword id="KW-0539">Nucleus</keyword>
<keyword id="KW-0597">Phosphoprotein</keyword>
<keyword id="KW-1185">Reference proteome</keyword>
<keyword id="KW-0747">Spliceosome</keyword>
<organism>
    <name type="scientific">Mus musculus</name>
    <name type="common">Mouse</name>
    <dbReference type="NCBI Taxonomy" id="10090"/>
    <lineage>
        <taxon>Eukaryota</taxon>
        <taxon>Metazoa</taxon>
        <taxon>Chordata</taxon>
        <taxon>Craniata</taxon>
        <taxon>Vertebrata</taxon>
        <taxon>Euteleostomi</taxon>
        <taxon>Mammalia</taxon>
        <taxon>Eutheria</taxon>
        <taxon>Euarchontoglires</taxon>
        <taxon>Glires</taxon>
        <taxon>Rodentia</taxon>
        <taxon>Myomorpha</taxon>
        <taxon>Muroidea</taxon>
        <taxon>Muridae</taxon>
        <taxon>Murinae</taxon>
        <taxon>Mus</taxon>
        <taxon>Mus</taxon>
    </lineage>
</organism>
<feature type="chain" id="PRO_0000072502" description="Tuftelin-interacting protein 11">
    <location>
        <begin position="1"/>
        <end position="838"/>
    </location>
</feature>
<feature type="domain" description="G-patch" evidence="4">
    <location>
        <begin position="150"/>
        <end position="196"/>
    </location>
</feature>
<feature type="region of interest" description="Disordered" evidence="5">
    <location>
        <begin position="1"/>
        <end position="74"/>
    </location>
</feature>
<feature type="region of interest" description="Required for interaction with DHX15" evidence="1">
    <location>
        <begin position="1"/>
        <end position="51"/>
    </location>
</feature>
<feature type="region of interest" description="Disordered" evidence="5">
    <location>
        <begin position="86"/>
        <end position="137"/>
    </location>
</feature>
<feature type="region of interest" description="Disordered" evidence="5">
    <location>
        <begin position="193"/>
        <end position="237"/>
    </location>
</feature>
<feature type="region of interest" description="Required for nuclear speckle localization">
    <location>
        <begin position="711"/>
        <end position="735"/>
    </location>
</feature>
<feature type="short sequence motif" description="Nuclear localization signal">
    <location>
        <begin position="701"/>
        <end position="706"/>
    </location>
</feature>
<feature type="compositionally biased region" description="Basic and acidic residues" evidence="5">
    <location>
        <begin position="1"/>
        <end position="13"/>
    </location>
</feature>
<feature type="compositionally biased region" description="Acidic residues" evidence="5">
    <location>
        <begin position="14"/>
        <end position="29"/>
    </location>
</feature>
<feature type="compositionally biased region" description="Basic and acidic residues" evidence="5">
    <location>
        <begin position="45"/>
        <end position="65"/>
    </location>
</feature>
<feature type="compositionally biased region" description="Acidic residues" evidence="5">
    <location>
        <begin position="92"/>
        <end position="101"/>
    </location>
</feature>
<feature type="compositionally biased region" description="Basic and acidic residues" evidence="5">
    <location>
        <begin position="102"/>
        <end position="117"/>
    </location>
</feature>
<feature type="compositionally biased region" description="Basic and acidic residues" evidence="5">
    <location>
        <begin position="218"/>
        <end position="232"/>
    </location>
</feature>
<feature type="modified residue" description="Phosphoserine" evidence="2">
    <location>
        <position position="2"/>
    </location>
</feature>
<feature type="modified residue" description="Phosphoserine" evidence="12 13">
    <location>
        <position position="60"/>
    </location>
</feature>
<feature type="modified residue" description="Phosphoserine" evidence="12 13">
    <location>
        <position position="96"/>
    </location>
</feature>
<feature type="modified residue" description="Phosphoserine" evidence="3">
    <location>
        <position position="99"/>
    </location>
</feature>
<feature type="modified residue" description="Phosphoserine" evidence="3">
    <location>
        <position position="145"/>
    </location>
</feature>
<feature type="modified residue" description="Phosphoserine" evidence="11 12 13">
    <location>
        <position position="211"/>
    </location>
</feature>
<feature type="mutagenesis site" description="No effect on nuclear speckled pattern localization; when associated with A-168 and R-170." evidence="8">
    <original>G</original>
    <variation>A</variation>
    <location>
        <position position="166"/>
    </location>
</feature>
<feature type="mutagenesis site" description="No effect on nuclear speckled pattern localization; when associated with A-166 and R-170." evidence="8">
    <original>G</original>
    <variation>A</variation>
    <location>
        <position position="168"/>
    </location>
</feature>
<feature type="mutagenesis site" description="No effect on nuclear speckled pattern localization; when associated with A-166 and A-168." evidence="8">
    <original>G</original>
    <variation>R</variation>
    <location>
        <position position="170"/>
    </location>
</feature>
<feature type="mutagenesis site" description="Predominant cytoplasmic localization." evidence="9">
    <original>VKDKFN</original>
    <variation>TTTTT</variation>
    <location>
        <begin position="701"/>
        <end position="706"/>
    </location>
</feature>
<feature type="sequence conflict" description="In Ref. 4; AAH17682." evidence="10" ref="4">
    <original>A</original>
    <variation>T</variation>
    <location>
        <position position="393"/>
    </location>
</feature>
<protein>
    <recommendedName>
        <fullName>Tuftelin-interacting protein 11</fullName>
    </recommendedName>
    <alternativeName>
        <fullName>Septin and tuftelin-interacting protein 1</fullName>
        <shortName>STIP-1</shortName>
    </alternativeName>
    <alternativeName>
        <fullName>Tuftelin-interacting protein 39</fullName>
    </alternativeName>
</protein>
<reference key="1">
    <citation type="journal article" date="1998" name="Connect. Tissue Res.">
        <title>Identification of tuftelin- and amelogenin-interacting proteins using the yeast two-hybrid system.</title>
        <authorList>
            <person name="Paine C.T."/>
            <person name="Paine M.L."/>
            <person name="Snead M.L."/>
        </authorList>
    </citation>
    <scope>NUCLEOTIDE SEQUENCE [MRNA]</scope>
    <source>
        <strain>Swiss Webster</strain>
        <tissue>Tooth</tissue>
    </source>
</reference>
<reference key="2">
    <citation type="journal article" date="2000" name="J. Biol. Chem.">
        <title>A tuftelin-interacting protein (TIP39) localizes to the apical secretory pole of mouse ameloblasts.</title>
        <authorList>
            <person name="Paine C.T."/>
            <person name="Paine M.L."/>
            <person name="Luo W."/>
            <person name="Okamoto C.T."/>
            <person name="Lyngstadaas S.P."/>
            <person name="Snead M.L."/>
        </authorList>
    </citation>
    <scope>NUCLEOTIDE SEQUENCE [MRNA]</scope>
    <scope>PARTIAL PROTEIN SEQUENCE</scope>
    <scope>INTERACTION WITH TUFT1</scope>
    <source>
        <strain>Swiss Webster</strain>
        <tissue>Tooth</tissue>
    </source>
</reference>
<reference key="3">
    <citation type="submission" date="2001-03" db="EMBL/GenBank/DDBJ databases">
        <authorList>
            <person name="Paine C.T."/>
            <person name="Paine M.L."/>
            <person name="Snead M.L."/>
        </authorList>
    </citation>
    <scope>SEQUENCE REVISION</scope>
</reference>
<reference key="4">
    <citation type="journal article" date="2004" name="Genome Res.">
        <title>The status, quality, and expansion of the NIH full-length cDNA project: the Mammalian Gene Collection (MGC).</title>
        <authorList>
            <consortium name="The MGC Project Team"/>
        </authorList>
    </citation>
    <scope>NUCLEOTIDE SEQUENCE [LARGE SCALE MRNA]</scope>
    <source>
        <tissue>Kidney</tissue>
    </source>
</reference>
<reference key="5">
    <citation type="journal article" date="2004" name="Mol. Cell. Proteomics">
        <title>Phosphoproteomic analysis of the developing mouse brain.</title>
        <authorList>
            <person name="Ballif B.A."/>
            <person name="Villen J."/>
            <person name="Beausoleil S.A."/>
            <person name="Schwartz D."/>
            <person name="Gygi S.P."/>
        </authorList>
    </citation>
    <scope>PHOSPHORYLATION [LARGE SCALE ANALYSIS] AT SER-211</scope>
    <scope>IDENTIFICATION BY MASS SPECTROMETRY [LARGE SCALE ANALYSIS]</scope>
    <source>
        <tissue>Embryonic brain</tissue>
    </source>
</reference>
<reference key="6">
    <citation type="journal article" date="2005" name="Cell. Mol. Life Sci.">
        <title>Structural organization and cellular localization of tuftelin-interacting protein 11 (TFIP11).</title>
        <authorList>
            <person name="Wen X."/>
            <person name="Lei Y.P."/>
            <person name="Zhou Y.L."/>
            <person name="Okamoto C.T."/>
            <person name="Snead M.L."/>
            <person name="Paine M.L."/>
        </authorList>
    </citation>
    <scope>FUNCTION</scope>
    <scope>SUBCELLULAR LOCATION</scope>
</reference>
<reference key="7">
    <citation type="journal article" date="2007" name="Proc. Natl. Acad. Sci. U.S.A.">
        <title>Large-scale phosphorylation analysis of mouse liver.</title>
        <authorList>
            <person name="Villen J."/>
            <person name="Beausoleil S.A."/>
            <person name="Gerber S.A."/>
            <person name="Gygi S.P."/>
        </authorList>
    </citation>
    <scope>PHOSPHORYLATION [LARGE SCALE ANALYSIS] AT SER-60; SER-96 AND SER-211</scope>
    <scope>IDENTIFICATION BY MASS SPECTROMETRY [LARGE SCALE ANALYSIS]</scope>
    <source>
        <tissue>Liver</tissue>
    </source>
</reference>
<reference key="8">
    <citation type="journal article" date="2008" name="Int. J. Mol. Sci.">
        <title>TFIP11 interacts with mDEAH9, an RNA helicase involved in spliceosome disassembly.</title>
        <authorList>
            <person name="Wen X."/>
            <person name="Tannukit S."/>
            <person name="Paine M.L."/>
        </authorList>
    </citation>
    <scope>SUBCELLULAR LOCATION</scope>
    <scope>INTERACTION WITH DHX15</scope>
    <scope>MUTAGENESIS OF GLY-166; GLY-168 AND GLY-170</scope>
</reference>
<reference key="9">
    <citation type="journal article" date="2009" name="Biochem. Biophys. Res. Commun.">
        <title>Identification of a novel nuclear localization signal and speckle-targeting sequence of tuftelin-interacting protein 11, a splicing factor involved in spliceosome disassembly.</title>
        <authorList>
            <person name="Tannukit S."/>
            <person name="Crabb T.L."/>
            <person name="Hertel K.J."/>
            <person name="Wen X."/>
            <person name="Jans D.A."/>
            <person name="Paine M.L."/>
        </authorList>
    </citation>
    <scope>FUNCTION IN SPLICEOSOME DISASSEMBLY</scope>
    <scope>SUBCELLULAR LOCATION</scope>
    <scope>MUTAGENESIS OF 701-VAL--ASN-706</scope>
</reference>
<reference key="10">
    <citation type="journal article" date="2010" name="Cell">
        <title>A tissue-specific atlas of mouse protein phosphorylation and expression.</title>
        <authorList>
            <person name="Huttlin E.L."/>
            <person name="Jedrychowski M.P."/>
            <person name="Elias J.E."/>
            <person name="Goswami T."/>
            <person name="Rad R."/>
            <person name="Beausoleil S.A."/>
            <person name="Villen J."/>
            <person name="Haas W."/>
            <person name="Sowa M.E."/>
            <person name="Gygi S.P."/>
        </authorList>
    </citation>
    <scope>PHOSPHORYLATION [LARGE SCALE ANALYSIS] AT SER-60; SER-96 AND SER-211</scope>
    <scope>IDENTIFICATION BY MASS SPECTROMETRY [LARGE SCALE ANALYSIS]</scope>
    <source>
        <tissue>Brain</tissue>
        <tissue>Heart</tissue>
        <tissue>Kidney</tissue>
        <tissue>Liver</tissue>
        <tissue>Lung</tissue>
        <tissue>Pancreas</tissue>
        <tissue>Spleen</tissue>
        <tissue>Testis</tissue>
    </source>
</reference>
<proteinExistence type="evidence at protein level"/>
<dbReference type="EMBL" id="AF290474">
    <property type="protein sequence ID" value="AAG10198.2"/>
    <property type="molecule type" value="mRNA"/>
</dbReference>
<dbReference type="EMBL" id="BC017682">
    <property type="protein sequence ID" value="AAH17682.1"/>
    <property type="molecule type" value="mRNA"/>
</dbReference>
<dbReference type="CCDS" id="CCDS19539.1"/>
<dbReference type="RefSeq" id="NP_061253.2">
    <property type="nucleotide sequence ID" value="NM_018783.4"/>
</dbReference>
<dbReference type="SMR" id="Q9ERA6"/>
<dbReference type="BioGRID" id="207728">
    <property type="interactions" value="39"/>
</dbReference>
<dbReference type="FunCoup" id="Q9ERA6">
    <property type="interactions" value="3920"/>
</dbReference>
<dbReference type="IntAct" id="Q9ERA6">
    <property type="interactions" value="3"/>
</dbReference>
<dbReference type="MINT" id="Q9ERA6"/>
<dbReference type="STRING" id="10090.ENSMUSP00000031288"/>
<dbReference type="iPTMnet" id="Q9ERA6"/>
<dbReference type="PhosphoSitePlus" id="Q9ERA6"/>
<dbReference type="jPOST" id="Q9ERA6"/>
<dbReference type="PaxDb" id="10090-ENSMUSP00000031288"/>
<dbReference type="ProteomicsDB" id="258863"/>
<dbReference type="Pumba" id="Q9ERA6"/>
<dbReference type="Antibodypedia" id="9983">
    <property type="antibodies" value="127 antibodies from 21 providers"/>
</dbReference>
<dbReference type="DNASU" id="54723"/>
<dbReference type="Ensembl" id="ENSMUST00000031288.14">
    <property type="protein sequence ID" value="ENSMUSP00000031288.8"/>
    <property type="gene ID" value="ENSMUSG00000029345.14"/>
</dbReference>
<dbReference type="GeneID" id="54723"/>
<dbReference type="KEGG" id="mmu:54723"/>
<dbReference type="UCSC" id="uc008ysy.1">
    <property type="organism name" value="mouse"/>
</dbReference>
<dbReference type="AGR" id="MGI:1930075"/>
<dbReference type="CTD" id="24144"/>
<dbReference type="MGI" id="MGI:1930075">
    <property type="gene designation" value="Tfip11"/>
</dbReference>
<dbReference type="VEuPathDB" id="HostDB:ENSMUSG00000029345"/>
<dbReference type="eggNOG" id="KOG2184">
    <property type="taxonomic scope" value="Eukaryota"/>
</dbReference>
<dbReference type="GeneTree" id="ENSGT00390000012739"/>
<dbReference type="HOGENOM" id="CLU_007977_1_1_1"/>
<dbReference type="InParanoid" id="Q9ERA6"/>
<dbReference type="OMA" id="CEQDIIQ"/>
<dbReference type="OrthoDB" id="4822at2759"/>
<dbReference type="PhylomeDB" id="Q9ERA6"/>
<dbReference type="TreeFam" id="TF314887"/>
<dbReference type="BioGRID-ORCS" id="54723">
    <property type="hits" value="16 hits in 78 CRISPR screens"/>
</dbReference>
<dbReference type="ChiTaRS" id="Tfip11">
    <property type="organism name" value="mouse"/>
</dbReference>
<dbReference type="PRO" id="PR:Q9ERA6"/>
<dbReference type="Proteomes" id="UP000000589">
    <property type="component" value="Chromosome 5"/>
</dbReference>
<dbReference type="RNAct" id="Q9ERA6">
    <property type="molecule type" value="protein"/>
</dbReference>
<dbReference type="Bgee" id="ENSMUSG00000029345">
    <property type="expression patterns" value="Expressed in superior surface of tongue and 299 other cell types or tissues"/>
</dbReference>
<dbReference type="ExpressionAtlas" id="Q9ERA6">
    <property type="expression patterns" value="baseline and differential"/>
</dbReference>
<dbReference type="GO" id="GO:0071013">
    <property type="term" value="C:catalytic step 2 spliceosome"/>
    <property type="evidence" value="ECO:0007669"/>
    <property type="project" value="Ensembl"/>
</dbReference>
<dbReference type="GO" id="GO:0000781">
    <property type="term" value="C:chromosome, telomeric region"/>
    <property type="evidence" value="ECO:0007669"/>
    <property type="project" value="Ensembl"/>
</dbReference>
<dbReference type="GO" id="GO:0005737">
    <property type="term" value="C:cytoplasm"/>
    <property type="evidence" value="ECO:0000247"/>
    <property type="project" value="MGI"/>
</dbReference>
<dbReference type="GO" id="GO:0031012">
    <property type="term" value="C:extracellular matrix"/>
    <property type="evidence" value="ECO:0000314"/>
    <property type="project" value="MGI"/>
</dbReference>
<dbReference type="GO" id="GO:0016607">
    <property type="term" value="C:nuclear speck"/>
    <property type="evidence" value="ECO:0007669"/>
    <property type="project" value="Ensembl"/>
</dbReference>
<dbReference type="GO" id="GO:0005730">
    <property type="term" value="C:nucleolus"/>
    <property type="evidence" value="ECO:0007669"/>
    <property type="project" value="Ensembl"/>
</dbReference>
<dbReference type="GO" id="GO:0005634">
    <property type="term" value="C:nucleus"/>
    <property type="evidence" value="ECO:0000247"/>
    <property type="project" value="MGI"/>
</dbReference>
<dbReference type="GO" id="GO:0005681">
    <property type="term" value="C:spliceosomal complex"/>
    <property type="evidence" value="ECO:0000250"/>
    <property type="project" value="UniProtKB"/>
</dbReference>
<dbReference type="GO" id="GO:0071008">
    <property type="term" value="C:U2-type post-mRNA release spliceosomal complex"/>
    <property type="evidence" value="ECO:0000250"/>
    <property type="project" value="UniProtKB"/>
</dbReference>
<dbReference type="GO" id="GO:0003676">
    <property type="term" value="F:nucleic acid binding"/>
    <property type="evidence" value="ECO:0007669"/>
    <property type="project" value="InterPro"/>
</dbReference>
<dbReference type="GO" id="GO:0031214">
    <property type="term" value="P:biomineral tissue development"/>
    <property type="evidence" value="ECO:0007669"/>
    <property type="project" value="UniProtKB-KW"/>
</dbReference>
<dbReference type="GO" id="GO:0030154">
    <property type="term" value="P:cell differentiation"/>
    <property type="evidence" value="ECO:0000303"/>
    <property type="project" value="UniProtKB"/>
</dbReference>
<dbReference type="GO" id="GO:0030198">
    <property type="term" value="P:extracellular matrix organization"/>
    <property type="evidence" value="ECO:0000303"/>
    <property type="project" value="UniProtKB"/>
</dbReference>
<dbReference type="GO" id="GO:0031333">
    <property type="term" value="P:negative regulation of protein-containing complex assembly"/>
    <property type="evidence" value="ECO:0007669"/>
    <property type="project" value="Ensembl"/>
</dbReference>
<dbReference type="GO" id="GO:0000390">
    <property type="term" value="P:spliceosomal complex disassembly"/>
    <property type="evidence" value="ECO:0000315"/>
    <property type="project" value="UniProtKB"/>
</dbReference>
<dbReference type="InterPro" id="IPR000467">
    <property type="entry name" value="G_patch_dom"/>
</dbReference>
<dbReference type="InterPro" id="IPR022783">
    <property type="entry name" value="GCFC_dom"/>
</dbReference>
<dbReference type="InterPro" id="IPR022159">
    <property type="entry name" value="STIP/TFIP11_N"/>
</dbReference>
<dbReference type="InterPro" id="IPR024933">
    <property type="entry name" value="TFP11"/>
</dbReference>
<dbReference type="InterPro" id="IPR045211">
    <property type="entry name" value="TFP11/STIP/Ntr1"/>
</dbReference>
<dbReference type="PANTHER" id="PTHR23329:SF1">
    <property type="entry name" value="TUFTELIN-INTERACTING PROTEIN 11"/>
    <property type="match status" value="1"/>
</dbReference>
<dbReference type="PANTHER" id="PTHR23329">
    <property type="entry name" value="TUFTELIN-INTERACTING PROTEIN 11-RELATED"/>
    <property type="match status" value="1"/>
</dbReference>
<dbReference type="Pfam" id="PF01585">
    <property type="entry name" value="G-patch"/>
    <property type="match status" value="1"/>
</dbReference>
<dbReference type="Pfam" id="PF07842">
    <property type="entry name" value="GCFC"/>
    <property type="match status" value="1"/>
</dbReference>
<dbReference type="Pfam" id="PF12457">
    <property type="entry name" value="TIP_N"/>
    <property type="match status" value="1"/>
</dbReference>
<dbReference type="PIRSF" id="PIRSF017706">
    <property type="entry name" value="TFIP11"/>
    <property type="match status" value="1"/>
</dbReference>
<dbReference type="SMART" id="SM00443">
    <property type="entry name" value="G_patch"/>
    <property type="match status" value="1"/>
</dbReference>
<dbReference type="PROSITE" id="PS50174">
    <property type="entry name" value="G_PATCH"/>
    <property type="match status" value="1"/>
</dbReference>
<sequence>MSLSHLYRDGEGHLDDDDDDERENFEITDWDLQNEFNPNRQRHWQTKEEATYGVWAERDSDEERPSFGGKRARDYSAPVNFISAGLKKGAAEEADSEDSDAEEKPVKQEDFPKDLGPKKLKTGGNFKPSQKGFSGGTKSFMDFGSWERHTKGIGQKLLQKMGYVPGRGLGKNAQGIINPIEAKQRKGKGAVGAYGSERTTQSLQDFPVADSEEEAEEEFQKELSQWRKDPSGSKKKPKYSYKTVEELKAKGRVSKKLTAPQKELSQVKVIDMTGREQKVYYSYSQISHKHSVPDEGVPLLAQLPPTAGKEARMPGFALPELEHNLQLLIERTEQEIIQSDRQLQYERDMVVSLSHELEKTAEVLAHEERVISNLSKVLALVEECERRMQPHGADPLTLDECARIFETLQDKYYEEYRLADRADLAVAIVYPLVKDYFKDWHPLEDGSYGTQIISKWKSLLENDQLLSHSSQDLSSDAFHRLMWEVWMPFVRNVVAQWQPRNCEPMVDFLDSWAHIIPVWILDNILDQLIFPKLQKEVDNWNPLTDTVPIHSWIHPWLPLMQARLEPLYSPVRSKLSSALQKWHPSDASAKLILQPWKEVLTPGSWEAFMLRNIVPKLGMCLGELVINPHQQHMDAFYWVMDWEGMISVSSLVGLLEKHFFPKWLQVLCSWLSNSPNYEEITKWYLGWKSMFSDQVLAHPSVKDKFNEALDIMNRAVSSNVGAYMQPGARENIAYLTHTERRKDFQYEAMQERREAENMAQRGIGVAASSVPMNFKDLIETKAEEHNIVFMPVIGKRHEGKQLYTFGRIVIYIDRGVVFVQGEKTWVPTSLQSLIDMAK</sequence>